<evidence type="ECO:0000255" key="1">
    <source>
        <dbReference type="HAMAP-Rule" id="MF_00182"/>
    </source>
</evidence>
<proteinExistence type="inferred from homology"/>
<name>FMT_AERHH</name>
<comment type="function">
    <text evidence="1">Attaches a formyl group to the free amino group of methionyl-tRNA(fMet). The formyl group appears to play a dual role in the initiator identity of N-formylmethionyl-tRNA by promoting its recognition by IF2 and preventing the misappropriation of this tRNA by the elongation apparatus.</text>
</comment>
<comment type="catalytic activity">
    <reaction evidence="1">
        <text>L-methionyl-tRNA(fMet) + (6R)-10-formyltetrahydrofolate = N-formyl-L-methionyl-tRNA(fMet) + (6S)-5,6,7,8-tetrahydrofolate + H(+)</text>
        <dbReference type="Rhea" id="RHEA:24380"/>
        <dbReference type="Rhea" id="RHEA-COMP:9952"/>
        <dbReference type="Rhea" id="RHEA-COMP:9953"/>
        <dbReference type="ChEBI" id="CHEBI:15378"/>
        <dbReference type="ChEBI" id="CHEBI:57453"/>
        <dbReference type="ChEBI" id="CHEBI:78530"/>
        <dbReference type="ChEBI" id="CHEBI:78844"/>
        <dbReference type="ChEBI" id="CHEBI:195366"/>
        <dbReference type="EC" id="2.1.2.9"/>
    </reaction>
</comment>
<comment type="similarity">
    <text evidence="1">Belongs to the Fmt family.</text>
</comment>
<organism>
    <name type="scientific">Aeromonas hydrophila subsp. hydrophila (strain ATCC 7966 / DSM 30187 / BCRC 13018 / CCUG 14551 / JCM 1027 / KCTC 2358 / NCIMB 9240 / NCTC 8049)</name>
    <dbReference type="NCBI Taxonomy" id="380703"/>
    <lineage>
        <taxon>Bacteria</taxon>
        <taxon>Pseudomonadati</taxon>
        <taxon>Pseudomonadota</taxon>
        <taxon>Gammaproteobacteria</taxon>
        <taxon>Aeromonadales</taxon>
        <taxon>Aeromonadaceae</taxon>
        <taxon>Aeromonas</taxon>
    </lineage>
</organism>
<dbReference type="EC" id="2.1.2.9" evidence="1"/>
<dbReference type="EMBL" id="CP000462">
    <property type="protein sequence ID" value="ABK37667.1"/>
    <property type="molecule type" value="Genomic_DNA"/>
</dbReference>
<dbReference type="RefSeq" id="WP_011704265.1">
    <property type="nucleotide sequence ID" value="NC_008570.1"/>
</dbReference>
<dbReference type="RefSeq" id="YP_854785.1">
    <property type="nucleotide sequence ID" value="NC_008570.1"/>
</dbReference>
<dbReference type="SMR" id="A0KEW9"/>
<dbReference type="STRING" id="380703.AHA_0257"/>
<dbReference type="EnsemblBacteria" id="ABK37667">
    <property type="protein sequence ID" value="ABK37667"/>
    <property type="gene ID" value="AHA_0257"/>
</dbReference>
<dbReference type="GeneID" id="4486958"/>
<dbReference type="KEGG" id="aha:AHA_0257"/>
<dbReference type="PATRIC" id="fig|380703.7.peg.244"/>
<dbReference type="eggNOG" id="COG0223">
    <property type="taxonomic scope" value="Bacteria"/>
</dbReference>
<dbReference type="HOGENOM" id="CLU_033347_1_2_6"/>
<dbReference type="OrthoDB" id="9802815at2"/>
<dbReference type="Proteomes" id="UP000000756">
    <property type="component" value="Chromosome"/>
</dbReference>
<dbReference type="GO" id="GO:0005829">
    <property type="term" value="C:cytosol"/>
    <property type="evidence" value="ECO:0007669"/>
    <property type="project" value="TreeGrafter"/>
</dbReference>
<dbReference type="GO" id="GO:0004479">
    <property type="term" value="F:methionyl-tRNA formyltransferase activity"/>
    <property type="evidence" value="ECO:0007669"/>
    <property type="project" value="UniProtKB-UniRule"/>
</dbReference>
<dbReference type="CDD" id="cd08646">
    <property type="entry name" value="FMT_core_Met-tRNA-FMT_N"/>
    <property type="match status" value="1"/>
</dbReference>
<dbReference type="CDD" id="cd08704">
    <property type="entry name" value="Met_tRNA_FMT_C"/>
    <property type="match status" value="1"/>
</dbReference>
<dbReference type="FunFam" id="3.40.50.170:FF:000003">
    <property type="entry name" value="Methionyl-tRNA formyltransferase"/>
    <property type="match status" value="1"/>
</dbReference>
<dbReference type="Gene3D" id="3.10.25.10">
    <property type="entry name" value="Formyl transferase, C-terminal domain"/>
    <property type="match status" value="1"/>
</dbReference>
<dbReference type="Gene3D" id="3.40.50.170">
    <property type="entry name" value="Formyl transferase, N-terminal domain"/>
    <property type="match status" value="1"/>
</dbReference>
<dbReference type="HAMAP" id="MF_00182">
    <property type="entry name" value="Formyl_trans"/>
    <property type="match status" value="1"/>
</dbReference>
<dbReference type="InterPro" id="IPR005794">
    <property type="entry name" value="Fmt"/>
</dbReference>
<dbReference type="InterPro" id="IPR005793">
    <property type="entry name" value="Formyl_trans_C"/>
</dbReference>
<dbReference type="InterPro" id="IPR037022">
    <property type="entry name" value="Formyl_trans_C_sf"/>
</dbReference>
<dbReference type="InterPro" id="IPR002376">
    <property type="entry name" value="Formyl_transf_N"/>
</dbReference>
<dbReference type="InterPro" id="IPR036477">
    <property type="entry name" value="Formyl_transf_N_sf"/>
</dbReference>
<dbReference type="InterPro" id="IPR011034">
    <property type="entry name" value="Formyl_transferase-like_C_sf"/>
</dbReference>
<dbReference type="InterPro" id="IPR001555">
    <property type="entry name" value="GART_AS"/>
</dbReference>
<dbReference type="InterPro" id="IPR044135">
    <property type="entry name" value="Met-tRNA-FMT_C"/>
</dbReference>
<dbReference type="InterPro" id="IPR041711">
    <property type="entry name" value="Met-tRNA-FMT_N"/>
</dbReference>
<dbReference type="NCBIfam" id="TIGR00460">
    <property type="entry name" value="fmt"/>
    <property type="match status" value="1"/>
</dbReference>
<dbReference type="PANTHER" id="PTHR11138">
    <property type="entry name" value="METHIONYL-TRNA FORMYLTRANSFERASE"/>
    <property type="match status" value="1"/>
</dbReference>
<dbReference type="PANTHER" id="PTHR11138:SF5">
    <property type="entry name" value="METHIONYL-TRNA FORMYLTRANSFERASE, MITOCHONDRIAL"/>
    <property type="match status" value="1"/>
</dbReference>
<dbReference type="Pfam" id="PF02911">
    <property type="entry name" value="Formyl_trans_C"/>
    <property type="match status" value="1"/>
</dbReference>
<dbReference type="Pfam" id="PF00551">
    <property type="entry name" value="Formyl_trans_N"/>
    <property type="match status" value="1"/>
</dbReference>
<dbReference type="SUPFAM" id="SSF50486">
    <property type="entry name" value="FMT C-terminal domain-like"/>
    <property type="match status" value="1"/>
</dbReference>
<dbReference type="SUPFAM" id="SSF53328">
    <property type="entry name" value="Formyltransferase"/>
    <property type="match status" value="1"/>
</dbReference>
<dbReference type="PROSITE" id="PS00373">
    <property type="entry name" value="GART"/>
    <property type="match status" value="1"/>
</dbReference>
<feature type="chain" id="PRO_1000071657" description="Methionyl-tRNA formyltransferase">
    <location>
        <begin position="1"/>
        <end position="314"/>
    </location>
</feature>
<feature type="binding site" evidence="1">
    <location>
        <begin position="112"/>
        <end position="115"/>
    </location>
    <ligand>
        <name>(6S)-5,6,7,8-tetrahydrofolate</name>
        <dbReference type="ChEBI" id="CHEBI:57453"/>
    </ligand>
</feature>
<sequence length="314" mass="33596">MNKLKLIFAGTPDFAARHLAALLSSDHEVVAVYTQPDKPAGRGQKLTASPVKELALAHNLPVYQPASLRKEEAQAELAALGADLMVVVAYGLILPKAVLDTPRLGCINVHGSLLPRWRGAAPIQRSIWAGDAETGVTIMQMDVGLDTGAMIRKVSCPIAADETSASLYDKLAGLGPQALVDTVNAMAAGNTAAEAQDDAQANYAEKLSKEEARIDWSMEAVAIERCTRAFNPWPISWFEVAGQTVKVWQAEVVAQDHGQAAGTLLKADKQGIDIATGKGVLRLLTLQPPGKKAMSVTDLLNSRRDWFEPGTQLN</sequence>
<reference key="1">
    <citation type="journal article" date="2006" name="J. Bacteriol.">
        <title>Genome sequence of Aeromonas hydrophila ATCC 7966T: jack of all trades.</title>
        <authorList>
            <person name="Seshadri R."/>
            <person name="Joseph S.W."/>
            <person name="Chopra A.K."/>
            <person name="Sha J."/>
            <person name="Shaw J."/>
            <person name="Graf J."/>
            <person name="Haft D.H."/>
            <person name="Wu M."/>
            <person name="Ren Q."/>
            <person name="Rosovitz M.J."/>
            <person name="Madupu R."/>
            <person name="Tallon L."/>
            <person name="Kim M."/>
            <person name="Jin S."/>
            <person name="Vuong H."/>
            <person name="Stine O.C."/>
            <person name="Ali A."/>
            <person name="Horneman A.J."/>
            <person name="Heidelberg J.F."/>
        </authorList>
    </citation>
    <scope>NUCLEOTIDE SEQUENCE [LARGE SCALE GENOMIC DNA]</scope>
    <source>
        <strain>ATCC 7966 / DSM 30187 / BCRC 13018 / CCUG 14551 / JCM 1027 / KCTC 2358 / NCIMB 9240 / NCTC 8049</strain>
    </source>
</reference>
<protein>
    <recommendedName>
        <fullName evidence="1">Methionyl-tRNA formyltransferase</fullName>
        <ecNumber evidence="1">2.1.2.9</ecNumber>
    </recommendedName>
</protein>
<accession>A0KEW9</accession>
<keyword id="KW-0648">Protein biosynthesis</keyword>
<keyword id="KW-1185">Reference proteome</keyword>
<keyword id="KW-0808">Transferase</keyword>
<gene>
    <name evidence="1" type="primary">fmt</name>
    <name type="ordered locus">AHA_0257</name>
</gene>